<name>YMR1_YEAST</name>
<feature type="chain" id="PRO_0000094948" description="Phosphoinositide 3-phosphatase">
    <location>
        <begin position="1"/>
        <end position="688"/>
    </location>
</feature>
<feature type="domain" description="Myotubularin phosphatase" evidence="1">
    <location>
        <begin position="155"/>
        <end position="637"/>
    </location>
</feature>
<feature type="region of interest" description="Disordered" evidence="3">
    <location>
        <begin position="647"/>
        <end position="672"/>
    </location>
</feature>
<feature type="compositionally biased region" description="Basic and acidic residues" evidence="3">
    <location>
        <begin position="647"/>
        <end position="668"/>
    </location>
</feature>
<feature type="active site" description="Phosphocysteine intermediate" evidence="2">
    <location>
        <position position="397"/>
    </location>
</feature>
<feature type="sequence conflict" description="In Ref. 3; AAA66903/AAA66901." evidence="9" ref="3">
    <original>Q</original>
    <variation>H</variation>
    <location>
        <position position="85"/>
    </location>
</feature>
<comment type="function">
    <text evidence="4 7">Lipid phosphatase which dephosphorylates phosphatidylinositol 3-monophosphate (PI3P). Involved in the control of PI3P-dependent signaling and in the maintenance of endosomal system integrity.</text>
</comment>
<comment type="catalytic activity">
    <reaction evidence="4">
        <text>a 1,2-diacyl-sn-glycero-3-phospho-(1D-myo-inositol-3-phosphate) + H2O = a 1,2-diacyl-sn-glycero-3-phospho-(1D-myo-inositol) + phosphate</text>
        <dbReference type="Rhea" id="RHEA:12316"/>
        <dbReference type="ChEBI" id="CHEBI:15377"/>
        <dbReference type="ChEBI" id="CHEBI:43474"/>
        <dbReference type="ChEBI" id="CHEBI:57880"/>
        <dbReference type="ChEBI" id="CHEBI:58088"/>
        <dbReference type="EC" id="3.1.3.64"/>
    </reaction>
</comment>
<comment type="subcellular location">
    <subcellularLocation>
        <location evidence="5">Cytoplasm</location>
    </subcellularLocation>
</comment>
<comment type="disruption phenotype">
    <text evidence="4">Exhibits increased phosphatidylinositol 3-monophosphate (PI3P) level.</text>
</comment>
<comment type="miscellaneous">
    <text evidence="6">Present with 1080 molecules/cell in log phase SD medium.</text>
</comment>
<comment type="similarity">
    <text evidence="9">Belongs to the protein-tyrosine phosphatase family. Non-receptor class myotubularin subfamily.</text>
</comment>
<keyword id="KW-0963">Cytoplasm</keyword>
<keyword id="KW-0378">Hydrolase</keyword>
<keyword id="KW-1185">Reference proteome</keyword>
<evidence type="ECO:0000255" key="1">
    <source>
        <dbReference type="PROSITE-ProRule" id="PRU00669"/>
    </source>
</evidence>
<evidence type="ECO:0000255" key="2">
    <source>
        <dbReference type="PROSITE-ProRule" id="PRU10044"/>
    </source>
</evidence>
<evidence type="ECO:0000256" key="3">
    <source>
        <dbReference type="SAM" id="MobiDB-lite"/>
    </source>
</evidence>
<evidence type="ECO:0000269" key="4">
    <source>
    </source>
</evidence>
<evidence type="ECO:0000269" key="5">
    <source>
    </source>
</evidence>
<evidence type="ECO:0000269" key="6">
    <source>
    </source>
</evidence>
<evidence type="ECO:0000269" key="7">
    <source>
    </source>
</evidence>
<evidence type="ECO:0000303" key="8">
    <source>
    </source>
</evidence>
<evidence type="ECO:0000305" key="9"/>
<gene>
    <name evidence="8" type="primary">YMR1</name>
    <name type="ordered locus">YJR110W</name>
    <name type="ORF">J2007</name>
</gene>
<accession>P47147</accession>
<accession>D6VWS9</accession>
<accession>Q12388</accession>
<dbReference type="EC" id="3.1.3.64" evidence="4"/>
<dbReference type="EMBL" id="Z49610">
    <property type="protein sequence ID" value="CAA89640.1"/>
    <property type="molecule type" value="Genomic_DNA"/>
</dbReference>
<dbReference type="EMBL" id="M30466">
    <property type="protein sequence ID" value="AAA66903.1"/>
    <property type="molecule type" value="Genomic_DNA"/>
</dbReference>
<dbReference type="EMBL" id="K01178">
    <property type="protein sequence ID" value="AAA66901.1"/>
    <property type="molecule type" value="Genomic_DNA"/>
</dbReference>
<dbReference type="EMBL" id="BK006943">
    <property type="protein sequence ID" value="DAA08895.1"/>
    <property type="molecule type" value="Genomic_DNA"/>
</dbReference>
<dbReference type="PIR" id="S57131">
    <property type="entry name" value="S57131"/>
</dbReference>
<dbReference type="RefSeq" id="NP_012644.1">
    <property type="nucleotide sequence ID" value="NM_001181768.1"/>
</dbReference>
<dbReference type="SMR" id="P47147"/>
<dbReference type="BioGRID" id="33866">
    <property type="interactions" value="81"/>
</dbReference>
<dbReference type="DIP" id="DIP-5260N"/>
<dbReference type="FunCoup" id="P47147">
    <property type="interactions" value="479"/>
</dbReference>
<dbReference type="IntAct" id="P47147">
    <property type="interactions" value="15"/>
</dbReference>
<dbReference type="MINT" id="P47147"/>
<dbReference type="STRING" id="4932.YJR110W"/>
<dbReference type="iPTMnet" id="P47147"/>
<dbReference type="PaxDb" id="4932-YJR110W"/>
<dbReference type="PeptideAtlas" id="P47147"/>
<dbReference type="EnsemblFungi" id="YJR110W_mRNA">
    <property type="protein sequence ID" value="YJR110W"/>
    <property type="gene ID" value="YJR110W"/>
</dbReference>
<dbReference type="GeneID" id="853574"/>
<dbReference type="KEGG" id="sce:YJR110W"/>
<dbReference type="AGR" id="SGD:S000003871"/>
<dbReference type="SGD" id="S000003871">
    <property type="gene designation" value="YMR1"/>
</dbReference>
<dbReference type="VEuPathDB" id="FungiDB:YJR110W"/>
<dbReference type="eggNOG" id="KOG1089">
    <property type="taxonomic scope" value="Eukaryota"/>
</dbReference>
<dbReference type="GeneTree" id="ENSGT00940000172348"/>
<dbReference type="HOGENOM" id="CLU_001839_5_1_1"/>
<dbReference type="InParanoid" id="P47147"/>
<dbReference type="OMA" id="RTMEGFM"/>
<dbReference type="OrthoDB" id="271628at2759"/>
<dbReference type="BioCyc" id="YEAST:MONOMER3O-76"/>
<dbReference type="Reactome" id="R-SCE-1483248">
    <property type="pathway name" value="Synthesis of PIPs at the ER membrane"/>
</dbReference>
<dbReference type="Reactome" id="R-SCE-1632852">
    <property type="pathway name" value="Macroautophagy"/>
</dbReference>
<dbReference type="Reactome" id="R-SCE-1660499">
    <property type="pathway name" value="Synthesis of PIPs at the plasma membrane"/>
</dbReference>
<dbReference type="Reactome" id="R-SCE-1660516">
    <property type="pathway name" value="Synthesis of PIPs at the early endosome membrane"/>
</dbReference>
<dbReference type="Reactome" id="R-SCE-1660517">
    <property type="pathway name" value="Synthesis of PIPs at the late endosome membrane"/>
</dbReference>
<dbReference type="BioGRID-ORCS" id="853574">
    <property type="hits" value="4 hits in 10 CRISPR screens"/>
</dbReference>
<dbReference type="PRO" id="PR:P47147"/>
<dbReference type="Proteomes" id="UP000002311">
    <property type="component" value="Chromosome X"/>
</dbReference>
<dbReference type="RNAct" id="P47147">
    <property type="molecule type" value="protein"/>
</dbReference>
<dbReference type="GO" id="GO:0005737">
    <property type="term" value="C:cytoplasm"/>
    <property type="evidence" value="ECO:0007005"/>
    <property type="project" value="SGD"/>
</dbReference>
<dbReference type="GO" id="GO:0016020">
    <property type="term" value="C:membrane"/>
    <property type="evidence" value="ECO:0000318"/>
    <property type="project" value="GO_Central"/>
</dbReference>
<dbReference type="GO" id="GO:0003729">
    <property type="term" value="F:mRNA binding"/>
    <property type="evidence" value="ECO:0000314"/>
    <property type="project" value="SGD"/>
</dbReference>
<dbReference type="GO" id="GO:0004438">
    <property type="term" value="F:phosphatidylinositol-3-phosphate phosphatase activity"/>
    <property type="evidence" value="ECO:0000315"/>
    <property type="project" value="UniProtKB"/>
</dbReference>
<dbReference type="GO" id="GO:0046856">
    <property type="term" value="P:phosphatidylinositol dephosphorylation"/>
    <property type="evidence" value="ECO:0000315"/>
    <property type="project" value="UniProtKB"/>
</dbReference>
<dbReference type="CDD" id="cd17666">
    <property type="entry name" value="PTP-MTM-like_fungal"/>
    <property type="match status" value="1"/>
</dbReference>
<dbReference type="Gene3D" id="2.30.29.30">
    <property type="entry name" value="Pleckstrin-homology domain (PH domain)/Phosphotyrosine-binding domain (PTB)"/>
    <property type="match status" value="1"/>
</dbReference>
<dbReference type="InterPro" id="IPR030564">
    <property type="entry name" value="Myotubularin"/>
</dbReference>
<dbReference type="InterPro" id="IPR010569">
    <property type="entry name" value="Myotubularin-like_Pase_dom"/>
</dbReference>
<dbReference type="InterPro" id="IPR011993">
    <property type="entry name" value="PH-like_dom_sf"/>
</dbReference>
<dbReference type="InterPro" id="IPR029021">
    <property type="entry name" value="Prot-tyrosine_phosphatase-like"/>
</dbReference>
<dbReference type="InterPro" id="IPR016130">
    <property type="entry name" value="Tyr_Pase_AS"/>
</dbReference>
<dbReference type="PANTHER" id="PTHR10807">
    <property type="entry name" value="MYOTUBULARIN-RELATED"/>
    <property type="match status" value="1"/>
</dbReference>
<dbReference type="PANTHER" id="PTHR10807:SF128">
    <property type="entry name" value="PHOSPHATIDYLINOSITOL-3,5-BISPHOSPHATE 3-PHOSPHATASE"/>
    <property type="match status" value="1"/>
</dbReference>
<dbReference type="Pfam" id="PF06602">
    <property type="entry name" value="Myotub-related"/>
    <property type="match status" value="1"/>
</dbReference>
<dbReference type="Pfam" id="PF21098">
    <property type="entry name" value="PH-GRAM_MTMR6-like"/>
    <property type="match status" value="1"/>
</dbReference>
<dbReference type="SUPFAM" id="SSF52799">
    <property type="entry name" value="(Phosphotyrosine protein) phosphatases II"/>
    <property type="match status" value="1"/>
</dbReference>
<dbReference type="SUPFAM" id="SSF50729">
    <property type="entry name" value="PH domain-like"/>
    <property type="match status" value="1"/>
</dbReference>
<dbReference type="PROSITE" id="PS51339">
    <property type="entry name" value="PPASE_MYOTUBULARIN"/>
    <property type="match status" value="1"/>
</dbReference>
<dbReference type="PROSITE" id="PS00383">
    <property type="entry name" value="TYR_PHOSPHATASE_1"/>
    <property type="match status" value="1"/>
</dbReference>
<reference key="1">
    <citation type="journal article" date="1996" name="EMBO J.">
        <title>Complete nucleotide sequence of Saccharomyces cerevisiae chromosome X.</title>
        <authorList>
            <person name="Galibert F."/>
            <person name="Alexandraki D."/>
            <person name="Baur A."/>
            <person name="Boles E."/>
            <person name="Chalwatzis N."/>
            <person name="Chuat J.-C."/>
            <person name="Coster F."/>
            <person name="Cziepluch C."/>
            <person name="de Haan M."/>
            <person name="Domdey H."/>
            <person name="Durand P."/>
            <person name="Entian K.-D."/>
            <person name="Gatius M."/>
            <person name="Goffeau A."/>
            <person name="Grivell L.A."/>
            <person name="Hennemann A."/>
            <person name="Herbert C.J."/>
            <person name="Heumann K."/>
            <person name="Hilger F."/>
            <person name="Hollenberg C.P."/>
            <person name="Huang M.-E."/>
            <person name="Jacq C."/>
            <person name="Jauniaux J.-C."/>
            <person name="Katsoulou C."/>
            <person name="Kirchrath L."/>
            <person name="Kleine K."/>
            <person name="Kordes E."/>
            <person name="Koetter P."/>
            <person name="Liebl S."/>
            <person name="Louis E.J."/>
            <person name="Manus V."/>
            <person name="Mewes H.-W."/>
            <person name="Miosga T."/>
            <person name="Obermaier B."/>
            <person name="Perea J."/>
            <person name="Pohl T.M."/>
            <person name="Portetelle D."/>
            <person name="Pujol A."/>
            <person name="Purnelle B."/>
            <person name="Ramezani Rad M."/>
            <person name="Rasmussen S.W."/>
            <person name="Rose M."/>
            <person name="Rossau R."/>
            <person name="Schaaff-Gerstenschlaeger I."/>
            <person name="Smits P.H.M."/>
            <person name="Scarcez T."/>
            <person name="Soriano N."/>
            <person name="To Van D."/>
            <person name="Tzermia M."/>
            <person name="Van Broekhoven A."/>
            <person name="Vandenbol M."/>
            <person name="Wedler H."/>
            <person name="von Wettstein D."/>
            <person name="Wambutt R."/>
            <person name="Zagulski M."/>
            <person name="Zollner A."/>
            <person name="Karpfinger-Hartl L."/>
        </authorList>
    </citation>
    <scope>NUCLEOTIDE SEQUENCE [LARGE SCALE GENOMIC DNA]</scope>
    <source>
        <strain>ATCC 204508 / S288c</strain>
    </source>
</reference>
<reference key="2">
    <citation type="journal article" date="2014" name="G3 (Bethesda)">
        <title>The reference genome sequence of Saccharomyces cerevisiae: Then and now.</title>
        <authorList>
            <person name="Engel S.R."/>
            <person name="Dietrich F.S."/>
            <person name="Fisk D.G."/>
            <person name="Binkley G."/>
            <person name="Balakrishnan R."/>
            <person name="Costanzo M.C."/>
            <person name="Dwight S.S."/>
            <person name="Hitz B.C."/>
            <person name="Karra K."/>
            <person name="Nash R.S."/>
            <person name="Weng S."/>
            <person name="Wong E.D."/>
            <person name="Lloyd P."/>
            <person name="Skrzypek M.S."/>
            <person name="Miyasato S.R."/>
            <person name="Simison M."/>
            <person name="Cherry J.M."/>
        </authorList>
    </citation>
    <scope>GENOME REANNOTATION</scope>
    <source>
        <strain>ATCC 204508 / S288c</strain>
    </source>
</reference>
<reference key="3">
    <citation type="journal article" date="1989" name="Mol. Cell. Biol.">
        <title>Arginine restriction induced by delta-N-(phosphonacetyl)-L-ornithine signals increased expression of HIS3, TRP5, CPA1, and CPA2 in Saccharomyces cerevisiae.</title>
        <authorList>
            <person name="Kinney D.M."/>
            <person name="Lusty C.J."/>
        </authorList>
    </citation>
    <scope>NUCLEOTIDE SEQUENCE [GENOMIC DNA] OF 1-88</scope>
</reference>
<reference key="4">
    <citation type="journal article" date="2000" name="Proc. Natl. Acad. Sci. U.S.A.">
        <title>Myotubularin, a protein tyrosine phosphatase mutated in myotubular myopathy, dephosphorylates the lipid second messenger, phosphatidylinositol 3-phosphate.</title>
        <authorList>
            <person name="Taylor G.S."/>
            <person name="Maehama T."/>
            <person name="Dixon J.E."/>
        </authorList>
    </citation>
    <scope>FUNCTION</scope>
    <scope>DISRUPTION PHENOTYPE</scope>
    <scope>CATALYTIC ACTIVITY</scope>
</reference>
<reference key="5">
    <citation type="journal article" date="2003" name="Nature">
        <title>Global analysis of protein localization in budding yeast.</title>
        <authorList>
            <person name="Huh W.-K."/>
            <person name="Falvo J.V."/>
            <person name="Gerke L.C."/>
            <person name="Carroll A.S."/>
            <person name="Howson R.W."/>
            <person name="Weissman J.S."/>
            <person name="O'Shea E.K."/>
        </authorList>
    </citation>
    <scope>SUBCELLULAR LOCATION [LARGE SCALE ANALYSIS]</scope>
</reference>
<reference key="6">
    <citation type="journal article" date="2003" name="Nature">
        <title>Global analysis of protein expression in yeast.</title>
        <authorList>
            <person name="Ghaemmaghami S."/>
            <person name="Huh W.-K."/>
            <person name="Bower K."/>
            <person name="Howson R.W."/>
            <person name="Belle A."/>
            <person name="Dephoure N."/>
            <person name="O'Shea E.K."/>
            <person name="Weissman J.S."/>
        </authorList>
    </citation>
    <scope>LEVEL OF PROTEIN EXPRESSION [LARGE SCALE ANALYSIS]</scope>
</reference>
<reference key="7">
    <citation type="journal article" date="2004" name="Mol. Biol. Cell">
        <title>Essential role for the myotubularin-related phosphatase Ymr1p and the synaptojanin-like phosphatases Sjl2p and Sjl3p in regulation of phosphatidylinositol 3-phosphate in yeast.</title>
        <authorList>
            <person name="Parrish W.R."/>
            <person name="Stefan C.J."/>
            <person name="Emr S.D."/>
        </authorList>
    </citation>
    <scope>FUNCTION</scope>
</reference>
<proteinExistence type="evidence at protein level"/>
<protein>
    <recommendedName>
        <fullName evidence="8">Phosphoinositide 3-phosphatase</fullName>
        <ecNumber evidence="4">3.1.3.64</ecNumber>
    </recommendedName>
    <alternativeName>
        <fullName evidence="8">Yeast myotubularin-related protein 1</fullName>
    </alternativeName>
</protein>
<organism>
    <name type="scientific">Saccharomyces cerevisiae (strain ATCC 204508 / S288c)</name>
    <name type="common">Baker's yeast</name>
    <dbReference type="NCBI Taxonomy" id="559292"/>
    <lineage>
        <taxon>Eukaryota</taxon>
        <taxon>Fungi</taxon>
        <taxon>Dikarya</taxon>
        <taxon>Ascomycota</taxon>
        <taxon>Saccharomycotina</taxon>
        <taxon>Saccharomycetes</taxon>
        <taxon>Saccharomycetales</taxon>
        <taxon>Saccharomycetaceae</taxon>
        <taxon>Saccharomyces</taxon>
    </lineage>
</organism>
<sequence>MEYIKIAKVSNVVLHRRGTATQGTLHLTTHHLIFESPQLSTEFWFPYPLIYGVHKNPGSTLLSKLTSTNQIQLEGTDSQNYKLYQGKDLWSFVNIKVIGKDYAVFSLDFGGDLHLQARKVYDSILNLTVLSNITQLYAFIYISNNLERKLPSPDSWDIYDPIKEFRRQGLDSKDETCPWRLSTVNEHYEFCPTYPSKLFVPRSTSDILLKHASKFRSQKRIPVLTYHHKATDCNILRSSQPLPGLINQRSIQDEKLVWESFNSFCNKDIRRTKHVIVDARPRTNALAQMALGGGTENMDNYNFFLADNNMGVDKSLKLPTVTRLFLGIDNIHIVSNTAAYMTEVICQGGDLNLPLEQNLIRSQKFSNWLKLNTLILKSVDMLLKSIIFNHSNVLVHCSDGWDRTSQVVSLLEICLDPFYRTFEGFMILVEKDWCSFGHRFLERSGHLNSDIRFHDNTMHSNFNDVDTNGDDLDIGVNTQDDYAEDDEGGEDETNLINLSRISKKFNENFKLNKKSLKFVSPVFQQFLDCVYQLLTQNPDLFEFNERFLRRLVYHLYSCQYGTFLSNSEKEKFQQNLPNKTKSVWDYFRSRRKQFINPNFIQRKRSGMNEHDQNLEEEEKVEWISPDLKKVQWWWQLYGRKDSEMNDELRHKRDSVPISVDKKSKEHSNSDGGKGLNLSIFGFDMFNRK</sequence>